<reference key="1">
    <citation type="journal article" date="2009" name="Appl. Environ. Microbiol.">
        <title>Three genomes from the phylum Acidobacteria provide insight into the lifestyles of these microorganisms in soils.</title>
        <authorList>
            <person name="Ward N.L."/>
            <person name="Challacombe J.F."/>
            <person name="Janssen P.H."/>
            <person name="Henrissat B."/>
            <person name="Coutinho P.M."/>
            <person name="Wu M."/>
            <person name="Xie G."/>
            <person name="Haft D.H."/>
            <person name="Sait M."/>
            <person name="Badger J."/>
            <person name="Barabote R.D."/>
            <person name="Bradley B."/>
            <person name="Brettin T.S."/>
            <person name="Brinkac L.M."/>
            <person name="Bruce D."/>
            <person name="Creasy T."/>
            <person name="Daugherty S.C."/>
            <person name="Davidsen T.M."/>
            <person name="DeBoy R.T."/>
            <person name="Detter J.C."/>
            <person name="Dodson R.J."/>
            <person name="Durkin A.S."/>
            <person name="Ganapathy A."/>
            <person name="Gwinn-Giglio M."/>
            <person name="Han C.S."/>
            <person name="Khouri H."/>
            <person name="Kiss H."/>
            <person name="Kothari S.P."/>
            <person name="Madupu R."/>
            <person name="Nelson K.E."/>
            <person name="Nelson W.C."/>
            <person name="Paulsen I."/>
            <person name="Penn K."/>
            <person name="Ren Q."/>
            <person name="Rosovitz M.J."/>
            <person name="Selengut J.D."/>
            <person name="Shrivastava S."/>
            <person name="Sullivan S.A."/>
            <person name="Tapia R."/>
            <person name="Thompson L.S."/>
            <person name="Watkins K.L."/>
            <person name="Yang Q."/>
            <person name="Yu C."/>
            <person name="Zafar N."/>
            <person name="Zhou L."/>
            <person name="Kuske C.R."/>
        </authorList>
    </citation>
    <scope>NUCLEOTIDE SEQUENCE [LARGE SCALE GENOMIC DNA]</scope>
    <source>
        <strain>Ellin6076</strain>
    </source>
</reference>
<proteinExistence type="inferred from homology"/>
<evidence type="ECO:0000255" key="1">
    <source>
        <dbReference type="HAMAP-Rule" id="MF_00220"/>
    </source>
</evidence>
<accession>Q01V55</accession>
<comment type="function">
    <text evidence="1">Catalyzes the reversible cyclization of carbamoyl aspartate to dihydroorotate.</text>
</comment>
<comment type="catalytic activity">
    <reaction evidence="1">
        <text>(S)-dihydroorotate + H2O = N-carbamoyl-L-aspartate + H(+)</text>
        <dbReference type="Rhea" id="RHEA:24296"/>
        <dbReference type="ChEBI" id="CHEBI:15377"/>
        <dbReference type="ChEBI" id="CHEBI:15378"/>
        <dbReference type="ChEBI" id="CHEBI:30864"/>
        <dbReference type="ChEBI" id="CHEBI:32814"/>
        <dbReference type="EC" id="3.5.2.3"/>
    </reaction>
</comment>
<comment type="cofactor">
    <cofactor evidence="1">
        <name>Zn(2+)</name>
        <dbReference type="ChEBI" id="CHEBI:29105"/>
    </cofactor>
    <text evidence="1">Binds 2 Zn(2+) ions per subunit.</text>
</comment>
<comment type="pathway">
    <text evidence="1">Pyrimidine metabolism; UMP biosynthesis via de novo pathway; (S)-dihydroorotate from bicarbonate: step 3/3.</text>
</comment>
<comment type="similarity">
    <text evidence="1">Belongs to the metallo-dependent hydrolases superfamily. DHOase family. Class I DHOase subfamily.</text>
</comment>
<keyword id="KW-0378">Hydrolase</keyword>
<keyword id="KW-0479">Metal-binding</keyword>
<keyword id="KW-0665">Pyrimidine biosynthesis</keyword>
<keyword id="KW-0862">Zinc</keyword>
<gene>
    <name evidence="1" type="primary">pyrC</name>
    <name type="ordered locus">Acid_5513</name>
</gene>
<sequence length="430" mass="45654">MPIVIRNGRVIDPASNTDRVADVFIVDGRIAGVAPNLSSPKAEVFDATGMIVAPGFIDMHVHLREPGFEHAETIESGSRAAAAGGFTSICCMPNTKPVNDSAMVTSYIVEQARSKAAVNVFPIGAITKGSAGEELAAIGAMKAAGAVAISDDGLPVMNARVMRRAMEFARSYDLPIIQHCEDLNLSAGGDMHEGANSVRWGLRGIPAASEDVMVARDLVLAQLTGARYHVAHISTRNAVAMVEYGRSHGLPVTCETTPHHFGLADADMAPYDSNYKMKPPLRSCGHRDAIIEGLIAGTISAIATDHAPHPGSEKMQEFERCPFGIIGLETALALALEELVAPGKITLARLIELFTTGPESVMRLGRGTLTPGAPGDVTVFSPTVEWTYDVNQSASRSRNSPFHARTFHGGPMATIVNGGLKWSRQSSHIT</sequence>
<name>PYRC_SOLUE</name>
<feature type="chain" id="PRO_1000024097" description="Dihydroorotase">
    <location>
        <begin position="1"/>
        <end position="430"/>
    </location>
</feature>
<feature type="active site" evidence="1">
    <location>
        <position position="305"/>
    </location>
</feature>
<feature type="binding site" evidence="1">
    <location>
        <position position="60"/>
    </location>
    <ligand>
        <name>Zn(2+)</name>
        <dbReference type="ChEBI" id="CHEBI:29105"/>
        <label>1</label>
    </ligand>
</feature>
<feature type="binding site" evidence="1">
    <location>
        <begin position="62"/>
        <end position="64"/>
    </location>
    <ligand>
        <name>substrate</name>
    </ligand>
</feature>
<feature type="binding site" evidence="1">
    <location>
        <position position="62"/>
    </location>
    <ligand>
        <name>Zn(2+)</name>
        <dbReference type="ChEBI" id="CHEBI:29105"/>
        <label>1</label>
    </ligand>
</feature>
<feature type="binding site" evidence="1">
    <location>
        <position position="94"/>
    </location>
    <ligand>
        <name>substrate</name>
    </ligand>
</feature>
<feature type="binding site" evidence="1">
    <location>
        <position position="152"/>
    </location>
    <ligand>
        <name>Zn(2+)</name>
        <dbReference type="ChEBI" id="CHEBI:29105"/>
        <label>1</label>
    </ligand>
</feature>
<feature type="binding site" evidence="1">
    <location>
        <position position="152"/>
    </location>
    <ligand>
        <name>Zn(2+)</name>
        <dbReference type="ChEBI" id="CHEBI:29105"/>
        <label>2</label>
    </ligand>
</feature>
<feature type="binding site" evidence="1">
    <location>
        <position position="179"/>
    </location>
    <ligand>
        <name>Zn(2+)</name>
        <dbReference type="ChEBI" id="CHEBI:29105"/>
        <label>2</label>
    </ligand>
</feature>
<feature type="binding site" evidence="1">
    <location>
        <position position="232"/>
    </location>
    <ligand>
        <name>Zn(2+)</name>
        <dbReference type="ChEBI" id="CHEBI:29105"/>
        <label>2</label>
    </ligand>
</feature>
<feature type="binding site" evidence="1">
    <location>
        <position position="305"/>
    </location>
    <ligand>
        <name>Zn(2+)</name>
        <dbReference type="ChEBI" id="CHEBI:29105"/>
        <label>1</label>
    </ligand>
</feature>
<feature type="binding site" evidence="1">
    <location>
        <position position="309"/>
    </location>
    <ligand>
        <name>substrate</name>
    </ligand>
</feature>
<feature type="binding site" evidence="1">
    <location>
        <begin position="323"/>
        <end position="324"/>
    </location>
    <ligand>
        <name>substrate</name>
    </ligand>
</feature>
<protein>
    <recommendedName>
        <fullName evidence="1">Dihydroorotase</fullName>
        <shortName evidence="1">DHOase</shortName>
        <ecNumber evidence="1">3.5.2.3</ecNumber>
    </recommendedName>
</protein>
<dbReference type="EC" id="3.5.2.3" evidence="1"/>
<dbReference type="EMBL" id="CP000473">
    <property type="protein sequence ID" value="ABJ86460.1"/>
    <property type="molecule type" value="Genomic_DNA"/>
</dbReference>
<dbReference type="SMR" id="Q01V55"/>
<dbReference type="STRING" id="234267.Acid_5513"/>
<dbReference type="KEGG" id="sus:Acid_5513"/>
<dbReference type="eggNOG" id="COG0044">
    <property type="taxonomic scope" value="Bacteria"/>
</dbReference>
<dbReference type="HOGENOM" id="CLU_015572_1_0_0"/>
<dbReference type="InParanoid" id="Q01V55"/>
<dbReference type="OrthoDB" id="9765462at2"/>
<dbReference type="UniPathway" id="UPA00070">
    <property type="reaction ID" value="UER00117"/>
</dbReference>
<dbReference type="GO" id="GO:0005737">
    <property type="term" value="C:cytoplasm"/>
    <property type="evidence" value="ECO:0007669"/>
    <property type="project" value="TreeGrafter"/>
</dbReference>
<dbReference type="GO" id="GO:0004038">
    <property type="term" value="F:allantoinase activity"/>
    <property type="evidence" value="ECO:0007669"/>
    <property type="project" value="TreeGrafter"/>
</dbReference>
<dbReference type="GO" id="GO:0004151">
    <property type="term" value="F:dihydroorotase activity"/>
    <property type="evidence" value="ECO:0007669"/>
    <property type="project" value="UniProtKB-UniRule"/>
</dbReference>
<dbReference type="GO" id="GO:0008270">
    <property type="term" value="F:zinc ion binding"/>
    <property type="evidence" value="ECO:0007669"/>
    <property type="project" value="UniProtKB-UniRule"/>
</dbReference>
<dbReference type="GO" id="GO:0044205">
    <property type="term" value="P:'de novo' UMP biosynthetic process"/>
    <property type="evidence" value="ECO:0007669"/>
    <property type="project" value="UniProtKB-UniRule"/>
</dbReference>
<dbReference type="GO" id="GO:0006145">
    <property type="term" value="P:purine nucleobase catabolic process"/>
    <property type="evidence" value="ECO:0007669"/>
    <property type="project" value="TreeGrafter"/>
</dbReference>
<dbReference type="CDD" id="cd01317">
    <property type="entry name" value="DHOase_IIa"/>
    <property type="match status" value="1"/>
</dbReference>
<dbReference type="Gene3D" id="3.20.20.140">
    <property type="entry name" value="Metal-dependent hydrolases"/>
    <property type="match status" value="1"/>
</dbReference>
<dbReference type="Gene3D" id="2.30.40.10">
    <property type="entry name" value="Urease, subunit C, domain 1"/>
    <property type="match status" value="1"/>
</dbReference>
<dbReference type="HAMAP" id="MF_00220_B">
    <property type="entry name" value="PyrC_classI_B"/>
    <property type="match status" value="1"/>
</dbReference>
<dbReference type="InterPro" id="IPR006680">
    <property type="entry name" value="Amidohydro-rel"/>
</dbReference>
<dbReference type="InterPro" id="IPR004722">
    <property type="entry name" value="DHOase"/>
</dbReference>
<dbReference type="InterPro" id="IPR050138">
    <property type="entry name" value="DHOase/Allantoinase_Hydrolase"/>
</dbReference>
<dbReference type="InterPro" id="IPR002195">
    <property type="entry name" value="Dihydroorotase_CS"/>
</dbReference>
<dbReference type="InterPro" id="IPR011059">
    <property type="entry name" value="Metal-dep_hydrolase_composite"/>
</dbReference>
<dbReference type="InterPro" id="IPR032466">
    <property type="entry name" value="Metal_Hydrolase"/>
</dbReference>
<dbReference type="NCBIfam" id="TIGR00857">
    <property type="entry name" value="pyrC_multi"/>
    <property type="match status" value="1"/>
</dbReference>
<dbReference type="PANTHER" id="PTHR43668">
    <property type="entry name" value="ALLANTOINASE"/>
    <property type="match status" value="1"/>
</dbReference>
<dbReference type="PANTHER" id="PTHR43668:SF2">
    <property type="entry name" value="ALLANTOINASE"/>
    <property type="match status" value="1"/>
</dbReference>
<dbReference type="Pfam" id="PF01979">
    <property type="entry name" value="Amidohydro_1"/>
    <property type="match status" value="1"/>
</dbReference>
<dbReference type="SUPFAM" id="SSF51338">
    <property type="entry name" value="Composite domain of metallo-dependent hydrolases"/>
    <property type="match status" value="1"/>
</dbReference>
<dbReference type="SUPFAM" id="SSF51556">
    <property type="entry name" value="Metallo-dependent hydrolases"/>
    <property type="match status" value="1"/>
</dbReference>
<dbReference type="PROSITE" id="PS00482">
    <property type="entry name" value="DIHYDROOROTASE_1"/>
    <property type="match status" value="1"/>
</dbReference>
<dbReference type="PROSITE" id="PS00483">
    <property type="entry name" value="DIHYDROOROTASE_2"/>
    <property type="match status" value="1"/>
</dbReference>
<organism>
    <name type="scientific">Solibacter usitatus (strain Ellin6076)</name>
    <dbReference type="NCBI Taxonomy" id="234267"/>
    <lineage>
        <taxon>Bacteria</taxon>
        <taxon>Pseudomonadati</taxon>
        <taxon>Acidobacteriota</taxon>
        <taxon>Terriglobia</taxon>
        <taxon>Bryobacterales</taxon>
        <taxon>Solibacteraceae</taxon>
        <taxon>Candidatus Solibacter</taxon>
    </lineage>
</organism>